<organism>
    <name type="scientific">Pithecopus azureus</name>
    <name type="common">Orange-legged monkey tree frog</name>
    <name type="synonym">Phyllomedusa azurea</name>
    <dbReference type="NCBI Taxonomy" id="2034991"/>
    <lineage>
        <taxon>Eukaryota</taxon>
        <taxon>Metazoa</taxon>
        <taxon>Chordata</taxon>
        <taxon>Craniata</taxon>
        <taxon>Vertebrata</taxon>
        <taxon>Euteleostomi</taxon>
        <taxon>Amphibia</taxon>
        <taxon>Batrachia</taxon>
        <taxon>Anura</taxon>
        <taxon>Neobatrachia</taxon>
        <taxon>Hyloidea</taxon>
        <taxon>Hylidae</taxon>
        <taxon>Phyllomedusinae</taxon>
        <taxon>Pithecopus</taxon>
    </lineage>
</organism>
<protein>
    <recommendedName>
        <fullName evidence="3">Tryptophyllin-T3-2</fullName>
        <shortName evidence="3">Pha-T3-2</shortName>
    </recommendedName>
    <alternativeName>
        <fullName evidence="3">Tryptophyllin-10</fullName>
    </alternativeName>
</protein>
<keyword id="KW-0878">Amphibian defense peptide</keyword>
<keyword id="KW-0903">Direct protein sequencing</keyword>
<keyword id="KW-0873">Pyrrolidone carboxylic acid</keyword>
<keyword id="KW-0964">Secreted</keyword>
<comment type="subcellular location">
    <subcellularLocation>
        <location evidence="2">Secreted</location>
    </subcellularLocation>
</comment>
<comment type="tissue specificity">
    <text evidence="2">Expressed by the skin glands.</text>
</comment>
<comment type="mass spectrometry"/>
<comment type="similarity">
    <text evidence="1">Belongs to the frog skin active peptide (FSAP) family. Tryptophillin subfamily.</text>
</comment>
<proteinExistence type="evidence at protein level"/>
<name>TY32_PITAZ</name>
<accession>P84950</accession>
<feature type="peptide" id="PRO_0000250418" description="Tryptophyllin-T3-2" evidence="2">
    <location>
        <begin position="1"/>
        <end position="13"/>
    </location>
</feature>
<feature type="modified residue" description="Pyrrolidone carboxylic acid" evidence="2">
    <location>
        <position position="1"/>
    </location>
</feature>
<dbReference type="GO" id="GO:0005576">
    <property type="term" value="C:extracellular region"/>
    <property type="evidence" value="ECO:0007669"/>
    <property type="project" value="UniProtKB-SubCell"/>
</dbReference>
<dbReference type="GO" id="GO:0006952">
    <property type="term" value="P:defense response"/>
    <property type="evidence" value="ECO:0007669"/>
    <property type="project" value="UniProtKB-KW"/>
</dbReference>
<dbReference type="InterPro" id="IPR013266">
    <property type="entry name" value="Tryptophillin"/>
</dbReference>
<dbReference type="Pfam" id="PF08248">
    <property type="entry name" value="Tryp_FSAP"/>
    <property type="match status" value="1"/>
</dbReference>
<reference evidence="4" key="1">
    <citation type="journal article" date="2007" name="J. Proteome Res.">
        <title>Amphibian skin secretomics: application of parallel quadrupole time-of-flight mass spectrometry and peptide precursor cDNA cloning to rapidly characterize the skin secretory peptidome of Phyllomedusa hypochondrialis azurea: discovery of a novel peptide family, the hyposins.</title>
        <authorList>
            <person name="Thompson A.H."/>
            <person name="Bjourson A.J."/>
            <person name="Orr D.F."/>
            <person name="Shaw C."/>
            <person name="McClean S."/>
        </authorList>
    </citation>
    <scope>PROTEIN SEQUENCE</scope>
    <scope>SUBCELLULAR LOCATION</scope>
    <scope>TISSUE SPECIFICITY</scope>
    <scope>MASS SPECTROMETRY</scope>
    <scope>PYROGLUTAMATE FORMATION AT GLN-1</scope>
    <source>
        <tissue evidence="2">Skin secretion</tissue>
    </source>
</reference>
<evidence type="ECO:0000255" key="1"/>
<evidence type="ECO:0000269" key="2">
    <source>
    </source>
</evidence>
<evidence type="ECO:0000303" key="3">
    <source>
    </source>
</evidence>
<evidence type="ECO:0000305" key="4"/>
<sequence>QDKPFWPPPIYPM</sequence>